<reference key="1">
    <citation type="submission" date="2007-10" db="EMBL/GenBank/DDBJ databases">
        <title>Genome sequence of Campylobacter concisus 13826 isolated from human feces.</title>
        <authorList>
            <person name="Fouts D.E."/>
            <person name="Mongodin E.F."/>
            <person name="Puiu D."/>
            <person name="Sebastian Y."/>
            <person name="Miller W.G."/>
            <person name="Mandrell R.E."/>
            <person name="On S."/>
            <person name="Nelson K.E."/>
        </authorList>
    </citation>
    <scope>NUCLEOTIDE SEQUENCE [LARGE SCALE GENOMIC DNA]</scope>
    <source>
        <strain>13826</strain>
    </source>
</reference>
<sequence length="397" mass="44206">MRILVLNSGSSSIKFQLFEMQTKTSLASGLVEQIGSSSSRAVLKANGEIYEIKRFIKDHHDGLEAMNELFTTSHTLHDLSELDGIGHRIVHGGESFFSSMIVDESVIKKIEEISPLAPLHNPGHLAGIKNAMKESKNVPHVVVFDTVFHQSMPEYAYRYALPYDVCKTHHIRKYGFHGTSHRYVCKQAAKMLGIEFDKFNAISLHLGNGASACAVQNGKSIDTSMGLSPLEGLIMGTRSGDMDPAVVIYLLNIGVLKWNEIDNFLNKKSGLFGICGSSDMREVVAKMQNDERAKLAFEMFCYRVKKYIGSYYAILGRVDALIFTGGIGENAPNTRQKICDDLKHLGIHINHELNFSNERGERCIDEDGAKIKTLIIPTNEELEIAIETARVIKERTL</sequence>
<comment type="function">
    <text evidence="1">Catalyzes the formation of acetyl phosphate from acetate and ATP. Can also catalyze the reverse reaction.</text>
</comment>
<comment type="catalytic activity">
    <reaction evidence="1">
        <text>acetate + ATP = acetyl phosphate + ADP</text>
        <dbReference type="Rhea" id="RHEA:11352"/>
        <dbReference type="ChEBI" id="CHEBI:22191"/>
        <dbReference type="ChEBI" id="CHEBI:30089"/>
        <dbReference type="ChEBI" id="CHEBI:30616"/>
        <dbReference type="ChEBI" id="CHEBI:456216"/>
        <dbReference type="EC" id="2.7.2.1"/>
    </reaction>
</comment>
<comment type="cofactor">
    <cofactor evidence="1">
        <name>Mg(2+)</name>
        <dbReference type="ChEBI" id="CHEBI:18420"/>
    </cofactor>
    <cofactor evidence="1">
        <name>Mn(2+)</name>
        <dbReference type="ChEBI" id="CHEBI:29035"/>
    </cofactor>
    <text evidence="1">Mg(2+). Can also accept Mn(2+).</text>
</comment>
<comment type="pathway">
    <text evidence="1">Metabolic intermediate biosynthesis; acetyl-CoA biosynthesis; acetyl-CoA from acetate: step 1/2.</text>
</comment>
<comment type="subunit">
    <text evidence="1">Homodimer.</text>
</comment>
<comment type="subcellular location">
    <subcellularLocation>
        <location evidence="1">Cytoplasm</location>
    </subcellularLocation>
</comment>
<comment type="similarity">
    <text evidence="1">Belongs to the acetokinase family.</text>
</comment>
<gene>
    <name evidence="1" type="primary">ackA</name>
    <name type="ordered locus">Ccon26_10400</name>
    <name type="ORF">CCC13826_0104</name>
</gene>
<keyword id="KW-0067">ATP-binding</keyword>
<keyword id="KW-0963">Cytoplasm</keyword>
<keyword id="KW-0418">Kinase</keyword>
<keyword id="KW-0460">Magnesium</keyword>
<keyword id="KW-0479">Metal-binding</keyword>
<keyword id="KW-0547">Nucleotide-binding</keyword>
<keyword id="KW-0808">Transferase</keyword>
<dbReference type="EC" id="2.7.2.1" evidence="1"/>
<dbReference type="EMBL" id="CP000792">
    <property type="protein sequence ID" value="EAT97613.1"/>
    <property type="molecule type" value="Genomic_DNA"/>
</dbReference>
<dbReference type="RefSeq" id="WP_012001825.1">
    <property type="nucleotide sequence ID" value="NC_009802.2"/>
</dbReference>
<dbReference type="SMR" id="A7ZDP4"/>
<dbReference type="STRING" id="360104.CCC13826_0104"/>
<dbReference type="KEGG" id="cco:CCC13826_0104"/>
<dbReference type="eggNOG" id="COG0282">
    <property type="taxonomic scope" value="Bacteria"/>
</dbReference>
<dbReference type="HOGENOM" id="CLU_020352_0_1_7"/>
<dbReference type="OrthoDB" id="9802453at2"/>
<dbReference type="UniPathway" id="UPA00340">
    <property type="reaction ID" value="UER00458"/>
</dbReference>
<dbReference type="Proteomes" id="UP000001121">
    <property type="component" value="Chromosome"/>
</dbReference>
<dbReference type="GO" id="GO:0005737">
    <property type="term" value="C:cytoplasm"/>
    <property type="evidence" value="ECO:0007669"/>
    <property type="project" value="UniProtKB-SubCell"/>
</dbReference>
<dbReference type="GO" id="GO:0008776">
    <property type="term" value="F:acetate kinase activity"/>
    <property type="evidence" value="ECO:0007669"/>
    <property type="project" value="UniProtKB-UniRule"/>
</dbReference>
<dbReference type="GO" id="GO:0005524">
    <property type="term" value="F:ATP binding"/>
    <property type="evidence" value="ECO:0007669"/>
    <property type="project" value="UniProtKB-KW"/>
</dbReference>
<dbReference type="GO" id="GO:0000287">
    <property type="term" value="F:magnesium ion binding"/>
    <property type="evidence" value="ECO:0007669"/>
    <property type="project" value="UniProtKB-UniRule"/>
</dbReference>
<dbReference type="GO" id="GO:0006083">
    <property type="term" value="P:acetate metabolic process"/>
    <property type="evidence" value="ECO:0007669"/>
    <property type="project" value="TreeGrafter"/>
</dbReference>
<dbReference type="GO" id="GO:0006085">
    <property type="term" value="P:acetyl-CoA biosynthetic process"/>
    <property type="evidence" value="ECO:0007669"/>
    <property type="project" value="UniProtKB-UniRule"/>
</dbReference>
<dbReference type="CDD" id="cd24010">
    <property type="entry name" value="ASKHA_NBD_AcK_PK"/>
    <property type="match status" value="1"/>
</dbReference>
<dbReference type="Gene3D" id="3.30.420.40">
    <property type="match status" value="2"/>
</dbReference>
<dbReference type="HAMAP" id="MF_00020">
    <property type="entry name" value="Acetate_kinase"/>
    <property type="match status" value="1"/>
</dbReference>
<dbReference type="InterPro" id="IPR004372">
    <property type="entry name" value="Ac/propionate_kinase"/>
</dbReference>
<dbReference type="InterPro" id="IPR000890">
    <property type="entry name" value="Aliphatic_acid_kin_short-chain"/>
</dbReference>
<dbReference type="InterPro" id="IPR023865">
    <property type="entry name" value="Aliphatic_acid_kinase_CS"/>
</dbReference>
<dbReference type="InterPro" id="IPR043129">
    <property type="entry name" value="ATPase_NBD"/>
</dbReference>
<dbReference type="NCBIfam" id="TIGR00016">
    <property type="entry name" value="ackA"/>
    <property type="match status" value="1"/>
</dbReference>
<dbReference type="PANTHER" id="PTHR21060">
    <property type="entry name" value="ACETATE KINASE"/>
    <property type="match status" value="1"/>
</dbReference>
<dbReference type="PANTHER" id="PTHR21060:SF15">
    <property type="entry name" value="ACETATE KINASE-RELATED"/>
    <property type="match status" value="1"/>
</dbReference>
<dbReference type="Pfam" id="PF00871">
    <property type="entry name" value="Acetate_kinase"/>
    <property type="match status" value="1"/>
</dbReference>
<dbReference type="PIRSF" id="PIRSF000722">
    <property type="entry name" value="Acetate_prop_kin"/>
    <property type="match status" value="1"/>
</dbReference>
<dbReference type="PRINTS" id="PR00471">
    <property type="entry name" value="ACETATEKNASE"/>
</dbReference>
<dbReference type="SUPFAM" id="SSF53067">
    <property type="entry name" value="Actin-like ATPase domain"/>
    <property type="match status" value="2"/>
</dbReference>
<dbReference type="PROSITE" id="PS01075">
    <property type="entry name" value="ACETATE_KINASE_1"/>
    <property type="match status" value="1"/>
</dbReference>
<dbReference type="PROSITE" id="PS01076">
    <property type="entry name" value="ACETATE_KINASE_2"/>
    <property type="match status" value="1"/>
</dbReference>
<protein>
    <recommendedName>
        <fullName evidence="1">Acetate kinase</fullName>
        <ecNumber evidence="1">2.7.2.1</ecNumber>
    </recommendedName>
    <alternativeName>
        <fullName evidence="1">Acetokinase</fullName>
    </alternativeName>
</protein>
<proteinExistence type="inferred from homology"/>
<name>ACKA_CAMC1</name>
<organism>
    <name type="scientific">Campylobacter concisus (strain 13826)</name>
    <dbReference type="NCBI Taxonomy" id="360104"/>
    <lineage>
        <taxon>Bacteria</taxon>
        <taxon>Pseudomonadati</taxon>
        <taxon>Campylobacterota</taxon>
        <taxon>Epsilonproteobacteria</taxon>
        <taxon>Campylobacterales</taxon>
        <taxon>Campylobacteraceae</taxon>
        <taxon>Campylobacter</taxon>
    </lineage>
</organism>
<evidence type="ECO:0000255" key="1">
    <source>
        <dbReference type="HAMAP-Rule" id="MF_00020"/>
    </source>
</evidence>
<feature type="chain" id="PRO_1000002213" description="Acetate kinase">
    <location>
        <begin position="1"/>
        <end position="397"/>
    </location>
</feature>
<feature type="active site" description="Proton donor/acceptor" evidence="1">
    <location>
        <position position="145"/>
    </location>
</feature>
<feature type="binding site" evidence="1">
    <location>
        <position position="7"/>
    </location>
    <ligand>
        <name>Mg(2+)</name>
        <dbReference type="ChEBI" id="CHEBI:18420"/>
    </ligand>
</feature>
<feature type="binding site" evidence="1">
    <location>
        <position position="14"/>
    </location>
    <ligand>
        <name>ATP</name>
        <dbReference type="ChEBI" id="CHEBI:30616"/>
    </ligand>
</feature>
<feature type="binding site" evidence="1">
    <location>
        <position position="88"/>
    </location>
    <ligand>
        <name>substrate</name>
    </ligand>
</feature>
<feature type="binding site" evidence="1">
    <location>
        <begin position="205"/>
        <end position="209"/>
    </location>
    <ligand>
        <name>ATP</name>
        <dbReference type="ChEBI" id="CHEBI:30616"/>
    </ligand>
</feature>
<feature type="binding site" evidence="1">
    <location>
        <begin position="279"/>
        <end position="281"/>
    </location>
    <ligand>
        <name>ATP</name>
        <dbReference type="ChEBI" id="CHEBI:30616"/>
    </ligand>
</feature>
<feature type="binding site" evidence="1">
    <location>
        <begin position="326"/>
        <end position="330"/>
    </location>
    <ligand>
        <name>ATP</name>
        <dbReference type="ChEBI" id="CHEBI:30616"/>
    </ligand>
</feature>
<feature type="binding site" evidence="1">
    <location>
        <position position="380"/>
    </location>
    <ligand>
        <name>Mg(2+)</name>
        <dbReference type="ChEBI" id="CHEBI:18420"/>
    </ligand>
</feature>
<feature type="site" description="Transition state stabilizer" evidence="1">
    <location>
        <position position="177"/>
    </location>
</feature>
<feature type="site" description="Transition state stabilizer" evidence="1">
    <location>
        <position position="238"/>
    </location>
</feature>
<accession>A7ZDP4</accession>